<dbReference type="EMBL" id="BC125993">
    <property type="protein sequence ID" value="AAI25994.1"/>
    <property type="molecule type" value="mRNA"/>
</dbReference>
<dbReference type="RefSeq" id="NP_001089089.1">
    <property type="nucleotide sequence ID" value="NM_001095620.1"/>
</dbReference>
<dbReference type="RefSeq" id="XP_018094603.1">
    <property type="nucleotide sequence ID" value="XM_018239114.1"/>
</dbReference>
<dbReference type="SMR" id="A0JMT0"/>
<dbReference type="BioGRID" id="591746">
    <property type="interactions" value="4"/>
</dbReference>
<dbReference type="GeneID" id="733264"/>
<dbReference type="KEGG" id="xla:733264"/>
<dbReference type="AGR" id="Xenbase:XB-GENE-1001158"/>
<dbReference type="CTD" id="733264"/>
<dbReference type="Xenbase" id="XB-GENE-1001158">
    <property type="gene designation" value="chaf1a.S"/>
</dbReference>
<dbReference type="OMA" id="ENDCKIN"/>
<dbReference type="OrthoDB" id="79480at2759"/>
<dbReference type="Proteomes" id="UP000186698">
    <property type="component" value="Chromosome 1S"/>
</dbReference>
<dbReference type="Bgee" id="733264">
    <property type="expression patterns" value="Expressed in blastula and 18 other cell types or tissues"/>
</dbReference>
<dbReference type="GO" id="GO:0033186">
    <property type="term" value="C:CAF-1 complex"/>
    <property type="evidence" value="ECO:0000250"/>
    <property type="project" value="UniProtKB"/>
</dbReference>
<dbReference type="GO" id="GO:0005634">
    <property type="term" value="C:nucleus"/>
    <property type="evidence" value="ECO:0000318"/>
    <property type="project" value="GO_Central"/>
</dbReference>
<dbReference type="GO" id="GO:0006281">
    <property type="term" value="P:DNA repair"/>
    <property type="evidence" value="ECO:0007669"/>
    <property type="project" value="UniProtKB-KW"/>
</dbReference>
<dbReference type="GO" id="GO:0006260">
    <property type="term" value="P:DNA replication"/>
    <property type="evidence" value="ECO:0007669"/>
    <property type="project" value="UniProtKB-KW"/>
</dbReference>
<dbReference type="GO" id="GO:0006335">
    <property type="term" value="P:DNA replication-dependent chromatin assembly"/>
    <property type="evidence" value="ECO:0000250"/>
    <property type="project" value="UniProtKB"/>
</dbReference>
<dbReference type="GO" id="GO:0006334">
    <property type="term" value="P:nucleosome assembly"/>
    <property type="evidence" value="ECO:0000318"/>
    <property type="project" value="GO_Central"/>
</dbReference>
<dbReference type="InterPro" id="IPR021644">
    <property type="entry name" value="CAF-1_p150_acidic"/>
</dbReference>
<dbReference type="InterPro" id="IPR029105">
    <property type="entry name" value="CAF1-p150_C2"/>
</dbReference>
<dbReference type="InterPro" id="IPR029091">
    <property type="entry name" value="CAF1_p150_N"/>
</dbReference>
<dbReference type="InterPro" id="IPR022043">
    <property type="entry name" value="CAF1A_DD"/>
</dbReference>
<dbReference type="PANTHER" id="PTHR15272:SF0">
    <property type="entry name" value="CHROMATIN ASSEMBLY FACTOR 1 SUBUNIT A"/>
    <property type="match status" value="1"/>
</dbReference>
<dbReference type="PANTHER" id="PTHR15272">
    <property type="entry name" value="CHROMATIN ASSEMBLY FACTOR 1 SUBUNIT A CAF-1 SUBUNIT A"/>
    <property type="match status" value="1"/>
</dbReference>
<dbReference type="Pfam" id="PF15539">
    <property type="entry name" value="CAF1-p150_C2"/>
    <property type="match status" value="1"/>
</dbReference>
<dbReference type="Pfam" id="PF15557">
    <property type="entry name" value="CAF1-p150_N"/>
    <property type="match status" value="1"/>
</dbReference>
<dbReference type="Pfam" id="PF11600">
    <property type="entry name" value="CAF1A_acidic"/>
    <property type="match status" value="1"/>
</dbReference>
<dbReference type="Pfam" id="PF12253">
    <property type="entry name" value="CAF1A_dimeriz"/>
    <property type="match status" value="1"/>
</dbReference>
<reference key="1">
    <citation type="submission" date="2006-10" db="EMBL/GenBank/DDBJ databases">
        <authorList>
            <consortium name="NIH - Xenopus Gene Collection (XGC) project"/>
        </authorList>
    </citation>
    <scope>NUCLEOTIDE SEQUENCE [LARGE SCALE MRNA]</scope>
    <source>
        <tissue>Ovary</tissue>
    </source>
</reference>
<comment type="function">
    <text evidence="1">Involved in chromatin assembly in DNA replication and DNA repair.</text>
</comment>
<comment type="subunit">
    <text evidence="1">Homodimer.</text>
</comment>
<comment type="subcellular location">
    <subcellularLocation>
        <location evidence="1">Nucleus</location>
    </subcellularLocation>
</comment>
<comment type="similarity">
    <text evidence="4">Belongs to the CHAF1A family.</text>
</comment>
<sequence length="885" mass="99669">MPGKEAAGDVMKSSTKSNTKKMVQARLPFKRLNPVPKDEGCLEEKKIRIPQNVSPQKMLYSLNSSMEDMENDCEMETEMTPIPKAINGKGPLDNYIRKAPKASNAPSIITIDLTEDSNISTSNDSPLNGESRAQLANGTVSPERSTTNAPLSTNEECTVSVDNKSLENMSFPELELDKPHQSAASCTSVSNFSPERAVKEDYNSSADDDSVSVSSSSSPVSLSSPDVQTGSKFTNGSSPSTSTTPTGKATSNKTSAEKKKTKDKAEKRQAEKEERECARREARAAKDLAKKKREGEREQREKDKKEKKEREDREKAEKNRLKEEKKKEKLEALEAKQEEKRKKEEEKRQKEEEKRLKEEEKRIKAEKAEITRFLQKPKTPQAPKTFARSCGKFAPFEIKKGMALAPLCRIDFEQEASEELDIFLQEQTSESSFLDEIKKRRPRKMGQTTVPTINSVEVDDVQVLGETDPVLGSNMVLEEHIKDIGVPERKKFGRMKLLQFCENHRPAYWGTSNKRSRVINPRKPWAQDTDMLDYEVDSDEEWEEEEPGESLSHSEGENEDDDPKEEEDEDDDGFFVPHGYLSNDEGVSDEECTDPENQKVRQKLKAKEWDDLQSNSKKIRVLQPVVIGCVWCDSKASEIRLLQKFSACILESPAVEEELTQDISSAQKIKDRQILSKLVPLLHGNVNGSKIIIQEFQECCRRGLFLEDNASHATDIESTSPNSTPQTPSNIIVPSKARLKRLISENSVYEKRPEHRMCWYVHSDVLKGLQQDNLPVPCQWTYITQVNSVSKENNGANGGSLQSLPLSGKRKSAGSMPITKFMKRARDLETAVNTDMDGFQADTEEEEDDDDCMIIEDQQAKDAEDSTIECKINLNDSAILASCQN</sequence>
<name>CA1AB_XENLA</name>
<accession>A0JMT0</accession>
<proteinExistence type="evidence at transcript level"/>
<organism>
    <name type="scientific">Xenopus laevis</name>
    <name type="common">African clawed frog</name>
    <dbReference type="NCBI Taxonomy" id="8355"/>
    <lineage>
        <taxon>Eukaryota</taxon>
        <taxon>Metazoa</taxon>
        <taxon>Chordata</taxon>
        <taxon>Craniata</taxon>
        <taxon>Vertebrata</taxon>
        <taxon>Euteleostomi</taxon>
        <taxon>Amphibia</taxon>
        <taxon>Batrachia</taxon>
        <taxon>Anura</taxon>
        <taxon>Pipoidea</taxon>
        <taxon>Pipidae</taxon>
        <taxon>Xenopodinae</taxon>
        <taxon>Xenopus</taxon>
        <taxon>Xenopus</taxon>
    </lineage>
</organism>
<protein>
    <recommendedName>
        <fullName>Chromatin assembly factor 1 subunit A-B</fullName>
        <shortName>CAF-1 subunit A</shortName>
    </recommendedName>
    <alternativeName>
        <fullName>Chromatin assembly factor I p150 subunit B</fullName>
        <shortName>CAF-I 150 kDa subunit B</shortName>
        <shortName>CAF-I p150-B</shortName>
        <shortName>xp150</shortName>
    </alternativeName>
</protein>
<evidence type="ECO:0000250" key="1"/>
<evidence type="ECO:0000255" key="2"/>
<evidence type="ECO:0000256" key="3">
    <source>
        <dbReference type="SAM" id="MobiDB-lite"/>
    </source>
</evidence>
<evidence type="ECO:0000305" key="4"/>
<keyword id="KW-0131">Cell cycle</keyword>
<keyword id="KW-0143">Chaperone</keyword>
<keyword id="KW-0175">Coiled coil</keyword>
<keyword id="KW-0227">DNA damage</keyword>
<keyword id="KW-0234">DNA repair</keyword>
<keyword id="KW-0235">DNA replication</keyword>
<keyword id="KW-0539">Nucleus</keyword>
<keyword id="KW-1185">Reference proteome</keyword>
<gene>
    <name type="primary">chaf1a-b</name>
    <name type="synonym">caip150</name>
</gene>
<feature type="chain" id="PRO_0000373885" description="Chromatin assembly factor 1 subunit A-B">
    <location>
        <begin position="1"/>
        <end position="885"/>
    </location>
</feature>
<feature type="region of interest" description="Disordered" evidence="3">
    <location>
        <begin position="1"/>
        <end position="24"/>
    </location>
</feature>
<feature type="region of interest" description="Disordered" evidence="3">
    <location>
        <begin position="115"/>
        <end position="157"/>
    </location>
</feature>
<feature type="region of interest" description="Disordered" evidence="3">
    <location>
        <begin position="176"/>
        <end position="361"/>
    </location>
</feature>
<feature type="region of interest" description="Disordered" evidence="3">
    <location>
        <begin position="536"/>
        <end position="605"/>
    </location>
</feature>
<feature type="region of interest" description="Necessary for homodimerization, competence for chromatin assembly" evidence="1">
    <location>
        <begin position="629"/>
        <end position="665"/>
    </location>
</feature>
<feature type="coiled-coil region" evidence="2">
    <location>
        <begin position="251"/>
        <end position="376"/>
    </location>
</feature>
<feature type="compositionally biased region" description="Low complexity" evidence="3">
    <location>
        <begin position="12"/>
        <end position="21"/>
    </location>
</feature>
<feature type="compositionally biased region" description="Polar residues" evidence="3">
    <location>
        <begin position="116"/>
        <end position="128"/>
    </location>
</feature>
<feature type="compositionally biased region" description="Polar residues" evidence="3">
    <location>
        <begin position="134"/>
        <end position="157"/>
    </location>
</feature>
<feature type="compositionally biased region" description="Polar residues" evidence="3">
    <location>
        <begin position="182"/>
        <end position="193"/>
    </location>
</feature>
<feature type="compositionally biased region" description="Low complexity" evidence="3">
    <location>
        <begin position="211"/>
        <end position="227"/>
    </location>
</feature>
<feature type="compositionally biased region" description="Low complexity" evidence="3">
    <location>
        <begin position="237"/>
        <end position="254"/>
    </location>
</feature>
<feature type="compositionally biased region" description="Basic and acidic residues" evidence="3">
    <location>
        <begin position="255"/>
        <end position="361"/>
    </location>
</feature>
<feature type="compositionally biased region" description="Acidic residues" evidence="3">
    <location>
        <begin position="536"/>
        <end position="548"/>
    </location>
</feature>
<feature type="compositionally biased region" description="Acidic residues" evidence="3">
    <location>
        <begin position="557"/>
        <end position="573"/>
    </location>
</feature>